<comment type="function">
    <text evidence="1">Permease that mediates the proton-dependent threonine and serine uptake.</text>
</comment>
<comment type="catalytic activity">
    <reaction evidence="1">
        <text>L-threonine(in) + H(+)(in) = L-threonine(out) + H(+)(out)</text>
        <dbReference type="Rhea" id="RHEA:28883"/>
        <dbReference type="ChEBI" id="CHEBI:15378"/>
        <dbReference type="ChEBI" id="CHEBI:57926"/>
    </reaction>
    <physiologicalReaction direction="right-to-left" evidence="1">
        <dbReference type="Rhea" id="RHEA:28885"/>
    </physiologicalReaction>
</comment>
<comment type="catalytic activity">
    <reaction evidence="1">
        <text>L-serine(in) + H(+)(in) = L-serine(out) + H(+)(out)</text>
        <dbReference type="Rhea" id="RHEA:28887"/>
        <dbReference type="ChEBI" id="CHEBI:15378"/>
        <dbReference type="ChEBI" id="CHEBI:33384"/>
    </reaction>
    <physiologicalReaction direction="right-to-left" evidence="1">
        <dbReference type="Rhea" id="RHEA:28889"/>
    </physiologicalReaction>
</comment>
<comment type="subcellular location">
    <subcellularLocation>
        <location evidence="1">Cell inner membrane</location>
        <topology evidence="2">Multi-pass membrane protein</topology>
    </subcellularLocation>
</comment>
<comment type="similarity">
    <text evidence="3">Belongs to the amino acid-polyamine-organocation (APC) superfamily.</text>
</comment>
<keyword id="KW-0029">Amino-acid transport</keyword>
<keyword id="KW-0997">Cell inner membrane</keyword>
<keyword id="KW-1003">Cell membrane</keyword>
<keyword id="KW-0472">Membrane</keyword>
<keyword id="KW-1185">Reference proteome</keyword>
<keyword id="KW-0812">Transmembrane</keyword>
<keyword id="KW-1133">Transmembrane helix</keyword>
<keyword id="KW-0813">Transport</keyword>
<accession>P0A189</accession>
<accession>P37456</accession>
<accession>Q9L6Q6</accession>
<name>THRP_SALTY</name>
<gene>
    <name evidence="1" type="primary">thrP</name>
    <name type="synonym">yifK</name>
    <name type="ordered locus">STM3930</name>
    <name type="ORF">STMD1.58</name>
</gene>
<protein>
    <recommendedName>
        <fullName evidence="1">Threonine/serine transporter ThrP</fullName>
    </recommendedName>
    <alternativeName>
        <fullName evidence="1">Threonine/serine:H(+) symporter ThrP</fullName>
    </alternativeName>
</protein>
<organism>
    <name type="scientific">Salmonella typhimurium (strain LT2 / SGSC1412 / ATCC 700720)</name>
    <dbReference type="NCBI Taxonomy" id="99287"/>
    <lineage>
        <taxon>Bacteria</taxon>
        <taxon>Pseudomonadati</taxon>
        <taxon>Pseudomonadota</taxon>
        <taxon>Gammaproteobacteria</taxon>
        <taxon>Enterobacterales</taxon>
        <taxon>Enterobacteriaceae</taxon>
        <taxon>Salmonella</taxon>
    </lineage>
</organism>
<sequence length="461" mass="50378">MAEKKPELQRGLEARHIELIALGGTIGVGLFMGAASTLKWAGPSVLLAYIIAGLFVFFIMRSMGEMLFLEPVTGSFAVYAHRYMSPFFGYLTAWSYWFMWMAVGISEITAIGVYVQFWFPEMAQWIPALIAVGLVALANLAAVRLYGEIEFWFAMIKVTTIIVMIIIGLGVIFFGFGNGGQAIGFGNLTEHGGFFAGGWKGFLTALCIVVASYQGVELIGITAGEAKNPQVTLRSAVGKVLWRILIFYVGAIFVIVTIFPWNEIGSNGSPFVLTFAKIGITAAAGIINFVVLTAALSGCNSGMYSCGRMLYALAKNRQLPAAVAKVSRHGVPVAGVALSILILLVGSCLNYIIPNPQRVFVYVYSASVLPGMVPWFVILISQLRFRRAHKEAIADHPFRSIMFPWANYLTMAFLVCVLIGMYFNEDTRMSLFVGVIFLLAVTLVYKVFGLNRHGTAHKVGE</sequence>
<dbReference type="EMBL" id="M95047">
    <property type="protein sequence ID" value="AAA92026.1"/>
    <property type="molecule type" value="Genomic_DNA"/>
</dbReference>
<dbReference type="EMBL" id="AE006468">
    <property type="protein sequence ID" value="AAL22779.1"/>
    <property type="molecule type" value="Genomic_DNA"/>
</dbReference>
<dbReference type="EMBL" id="AF233324">
    <property type="protein sequence ID" value="AAF33457.1"/>
    <property type="molecule type" value="Genomic_DNA"/>
</dbReference>
<dbReference type="PIR" id="S27728">
    <property type="entry name" value="S27728"/>
</dbReference>
<dbReference type="RefSeq" id="NP_462820.1">
    <property type="nucleotide sequence ID" value="NC_003197.2"/>
</dbReference>
<dbReference type="RefSeq" id="WP_000818378.1">
    <property type="nucleotide sequence ID" value="NC_003197.2"/>
</dbReference>
<dbReference type="SMR" id="P0A189"/>
<dbReference type="STRING" id="99287.STM3930"/>
<dbReference type="PaxDb" id="99287-STM3930"/>
<dbReference type="GeneID" id="1255456"/>
<dbReference type="KEGG" id="stm:STM3930"/>
<dbReference type="PATRIC" id="fig|99287.12.peg.4151"/>
<dbReference type="HOGENOM" id="CLU_007946_9_3_6"/>
<dbReference type="OMA" id="FWSVMVN"/>
<dbReference type="PhylomeDB" id="P0A189"/>
<dbReference type="BioCyc" id="SENT99287:STM3930-MONOMER"/>
<dbReference type="Proteomes" id="UP000001014">
    <property type="component" value="Chromosome"/>
</dbReference>
<dbReference type="GO" id="GO:0005886">
    <property type="term" value="C:plasma membrane"/>
    <property type="evidence" value="ECO:0007669"/>
    <property type="project" value="UniProtKB-SubCell"/>
</dbReference>
<dbReference type="GO" id="GO:0006865">
    <property type="term" value="P:amino acid transport"/>
    <property type="evidence" value="ECO:0007669"/>
    <property type="project" value="UniProtKB-KW"/>
</dbReference>
<dbReference type="GO" id="GO:0055085">
    <property type="term" value="P:transmembrane transport"/>
    <property type="evidence" value="ECO:0007669"/>
    <property type="project" value="InterPro"/>
</dbReference>
<dbReference type="FunFam" id="1.20.1740.10:FF:000001">
    <property type="entry name" value="Amino acid permease"/>
    <property type="match status" value="1"/>
</dbReference>
<dbReference type="Gene3D" id="1.20.1740.10">
    <property type="entry name" value="Amino acid/polyamine transporter I"/>
    <property type="match status" value="1"/>
</dbReference>
<dbReference type="InterPro" id="IPR004841">
    <property type="entry name" value="AA-permease/SLC12A_dom"/>
</dbReference>
<dbReference type="InterPro" id="IPR004840">
    <property type="entry name" value="Amino_acid_permease_CS"/>
</dbReference>
<dbReference type="NCBIfam" id="NF047867">
    <property type="entry name" value="AA_transp_ThrP"/>
    <property type="match status" value="1"/>
</dbReference>
<dbReference type="NCBIfam" id="NF008016">
    <property type="entry name" value="PRK10746.1"/>
    <property type="match status" value="1"/>
</dbReference>
<dbReference type="PANTHER" id="PTHR43495">
    <property type="entry name" value="GABA PERMEASE"/>
    <property type="match status" value="1"/>
</dbReference>
<dbReference type="PANTHER" id="PTHR43495:SF7">
    <property type="entry name" value="TRANSPORT PROTEIN YIFK-RELATED"/>
    <property type="match status" value="1"/>
</dbReference>
<dbReference type="Pfam" id="PF00324">
    <property type="entry name" value="AA_permease"/>
    <property type="match status" value="1"/>
</dbReference>
<dbReference type="PIRSF" id="PIRSF006060">
    <property type="entry name" value="AA_transporter"/>
    <property type="match status" value="1"/>
</dbReference>
<dbReference type="PROSITE" id="PS00218">
    <property type="entry name" value="AMINO_ACID_PERMEASE_1"/>
    <property type="match status" value="1"/>
</dbReference>
<evidence type="ECO:0000250" key="1">
    <source>
        <dbReference type="UniProtKB" id="P27837"/>
    </source>
</evidence>
<evidence type="ECO:0000255" key="2"/>
<evidence type="ECO:0000305" key="3"/>
<feature type="chain" id="PRO_0000054220" description="Threonine/serine transporter ThrP">
    <location>
        <begin position="1"/>
        <end position="461"/>
    </location>
</feature>
<feature type="transmembrane region" description="Helical" evidence="2">
    <location>
        <begin position="17"/>
        <end position="37"/>
    </location>
</feature>
<feature type="transmembrane region" description="Helical" evidence="2">
    <location>
        <begin position="40"/>
        <end position="60"/>
    </location>
</feature>
<feature type="transmembrane region" description="Helical" evidence="2">
    <location>
        <begin position="97"/>
        <end position="117"/>
    </location>
</feature>
<feature type="transmembrane region" description="Helical" evidence="2">
    <location>
        <begin position="123"/>
        <end position="143"/>
    </location>
</feature>
<feature type="transmembrane region" description="Helical" evidence="2">
    <location>
        <begin position="156"/>
        <end position="176"/>
    </location>
</feature>
<feature type="transmembrane region" description="Helical" evidence="2">
    <location>
        <begin position="201"/>
        <end position="221"/>
    </location>
</feature>
<feature type="transmembrane region" description="Helical" evidence="2">
    <location>
        <begin position="244"/>
        <end position="264"/>
    </location>
</feature>
<feature type="transmembrane region" description="Helical" evidence="2">
    <location>
        <begin position="278"/>
        <end position="298"/>
    </location>
</feature>
<feature type="transmembrane region" description="Helical" evidence="2">
    <location>
        <begin position="333"/>
        <end position="353"/>
    </location>
</feature>
<feature type="transmembrane region" description="Helical" evidence="2">
    <location>
        <begin position="360"/>
        <end position="380"/>
    </location>
</feature>
<feature type="transmembrane region" description="Helical" evidence="2">
    <location>
        <begin position="401"/>
        <end position="421"/>
    </location>
</feature>
<feature type="transmembrane region" description="Helical" evidence="2">
    <location>
        <begin position="430"/>
        <end position="450"/>
    </location>
</feature>
<feature type="sequence conflict" description="In Ref. 1; AAA92026." evidence="3" ref="1">
    <original>K</original>
    <variation>E</variation>
    <location>
        <position position="200"/>
    </location>
</feature>
<proteinExistence type="inferred from homology"/>
<reference key="1">
    <citation type="journal article" date="1993" name="J. Bacteriol.">
        <title>The Salmonella typhimurium uracil-sensitive mutation use is in argU and encodes a minor arginine tRNA.</title>
        <authorList>
            <person name="Lu C.D."/>
            <person name="Abdelal A.T."/>
        </authorList>
    </citation>
    <scope>NUCLEOTIDE SEQUENCE [GENOMIC DNA]</scope>
</reference>
<reference key="2">
    <citation type="journal article" date="2001" name="Nature">
        <title>Complete genome sequence of Salmonella enterica serovar Typhimurium LT2.</title>
        <authorList>
            <person name="McClelland M."/>
            <person name="Sanderson K.E."/>
            <person name="Spieth J."/>
            <person name="Clifton S.W."/>
            <person name="Latreille P."/>
            <person name="Courtney L."/>
            <person name="Porwollik S."/>
            <person name="Ali J."/>
            <person name="Dante M."/>
            <person name="Du F."/>
            <person name="Hou S."/>
            <person name="Layman D."/>
            <person name="Leonard S."/>
            <person name="Nguyen C."/>
            <person name="Scott K."/>
            <person name="Holmes A."/>
            <person name="Grewal N."/>
            <person name="Mulvaney E."/>
            <person name="Ryan E."/>
            <person name="Sun H."/>
            <person name="Florea L."/>
            <person name="Miller W."/>
            <person name="Stoneking T."/>
            <person name="Nhan M."/>
            <person name="Waterston R."/>
            <person name="Wilson R.K."/>
        </authorList>
    </citation>
    <scope>NUCLEOTIDE SEQUENCE [LARGE SCALE GENOMIC DNA]</scope>
    <source>
        <strain>LT2 / SGSC1412 / ATCC 700720</strain>
    </source>
</reference>